<evidence type="ECO:0000255" key="1">
    <source>
        <dbReference type="HAMAP-Rule" id="MF_01025"/>
    </source>
</evidence>
<reference key="1">
    <citation type="submission" date="2006-06" db="EMBL/GenBank/DDBJ databases">
        <title>Complete sequence of Pseudoalteromonas atlantica T6c.</title>
        <authorList>
            <consortium name="US DOE Joint Genome Institute"/>
            <person name="Copeland A."/>
            <person name="Lucas S."/>
            <person name="Lapidus A."/>
            <person name="Barry K."/>
            <person name="Detter J.C."/>
            <person name="Glavina del Rio T."/>
            <person name="Hammon N."/>
            <person name="Israni S."/>
            <person name="Dalin E."/>
            <person name="Tice H."/>
            <person name="Pitluck S."/>
            <person name="Saunders E."/>
            <person name="Brettin T."/>
            <person name="Bruce D."/>
            <person name="Han C."/>
            <person name="Tapia R."/>
            <person name="Gilna P."/>
            <person name="Schmutz J."/>
            <person name="Larimer F."/>
            <person name="Land M."/>
            <person name="Hauser L."/>
            <person name="Kyrpides N."/>
            <person name="Kim E."/>
            <person name="Karls A.C."/>
            <person name="Bartlett D."/>
            <person name="Higgins B.P."/>
            <person name="Richardson P."/>
        </authorList>
    </citation>
    <scope>NUCLEOTIDE SEQUENCE [LARGE SCALE GENOMIC DNA]</scope>
    <source>
        <strain>T6c / ATCC BAA-1087</strain>
    </source>
</reference>
<sequence length="519" mass="56545">MSNQVKIFDTTLRDGEQALAASLSMKEKLQIALALERLGVDIIEAGFPVSSPGDFRSVRSIAQEVKNATVCGLSRALEKDIDACGEALSVADNFRIHTFIATSDIHVANKLRKSQDEVVEMAVNAIKHAGRYTDDIEFSCEDAGRTPIDYLCRMVESAINAGATTVNIPDTVGYTTPTEFGGIIQNLFNRVPNIDKATISVHCHNDLGLAVANSLVAVEYGARQIECTINGIGERAGNCSLEEIAMILQTRQAMLGLNTNIRSHEISRTSKLVSQLCNMPVQSNKAIVGANAFSHSSGIHQDGVLKAQNTYEIMTPESVGINKNNLNLTSRSGRHVIKHRLEELGYKAEDYDLDTLYASFVKLADKKGQVFDYDLEALLFFDKQKPADEHYKLLYLQASSGKEIIPSATVKLQVGEEEIIESCTGNGPVDAAYKAIIKVLGHEQLEIVDFKLDSKGEGADALAQVSVIVEYNGRRFNGIGLATDIVESGVKALIHVLNNTHLADQIDHQKKQQTQTAGV</sequence>
<feature type="chain" id="PRO_1000149250" description="2-isopropylmalate synthase">
    <location>
        <begin position="1"/>
        <end position="519"/>
    </location>
</feature>
<feature type="domain" description="Pyruvate carboxyltransferase" evidence="1">
    <location>
        <begin position="5"/>
        <end position="267"/>
    </location>
</feature>
<feature type="region of interest" description="Regulatory domain" evidence="1">
    <location>
        <begin position="392"/>
        <end position="519"/>
    </location>
</feature>
<feature type="binding site" evidence="1">
    <location>
        <position position="14"/>
    </location>
    <ligand>
        <name>Mn(2+)</name>
        <dbReference type="ChEBI" id="CHEBI:29035"/>
    </ligand>
</feature>
<feature type="binding site" evidence="1">
    <location>
        <position position="202"/>
    </location>
    <ligand>
        <name>Mn(2+)</name>
        <dbReference type="ChEBI" id="CHEBI:29035"/>
    </ligand>
</feature>
<feature type="binding site" evidence="1">
    <location>
        <position position="204"/>
    </location>
    <ligand>
        <name>Mn(2+)</name>
        <dbReference type="ChEBI" id="CHEBI:29035"/>
    </ligand>
</feature>
<feature type="binding site" evidence="1">
    <location>
        <position position="238"/>
    </location>
    <ligand>
        <name>Mn(2+)</name>
        <dbReference type="ChEBI" id="CHEBI:29035"/>
    </ligand>
</feature>
<protein>
    <recommendedName>
        <fullName evidence="1">2-isopropylmalate synthase</fullName>
        <ecNumber evidence="1">2.3.3.13</ecNumber>
    </recommendedName>
    <alternativeName>
        <fullName evidence="1">Alpha-IPM synthase</fullName>
    </alternativeName>
    <alternativeName>
        <fullName evidence="1">Alpha-isopropylmalate synthase</fullName>
    </alternativeName>
</protein>
<gene>
    <name evidence="1" type="primary">leuA</name>
    <name type="ordered locus">Patl_3268</name>
</gene>
<comment type="function">
    <text evidence="1">Catalyzes the condensation of the acetyl group of acetyl-CoA with 3-methyl-2-oxobutanoate (2-ketoisovalerate) to form 3-carboxy-3-hydroxy-4-methylpentanoate (2-isopropylmalate).</text>
</comment>
<comment type="catalytic activity">
    <reaction evidence="1">
        <text>3-methyl-2-oxobutanoate + acetyl-CoA + H2O = (2S)-2-isopropylmalate + CoA + H(+)</text>
        <dbReference type="Rhea" id="RHEA:21524"/>
        <dbReference type="ChEBI" id="CHEBI:1178"/>
        <dbReference type="ChEBI" id="CHEBI:11851"/>
        <dbReference type="ChEBI" id="CHEBI:15377"/>
        <dbReference type="ChEBI" id="CHEBI:15378"/>
        <dbReference type="ChEBI" id="CHEBI:57287"/>
        <dbReference type="ChEBI" id="CHEBI:57288"/>
        <dbReference type="EC" id="2.3.3.13"/>
    </reaction>
</comment>
<comment type="cofactor">
    <cofactor evidence="1">
        <name>Mn(2+)</name>
        <dbReference type="ChEBI" id="CHEBI:29035"/>
    </cofactor>
</comment>
<comment type="pathway">
    <text evidence="1">Amino-acid biosynthesis; L-leucine biosynthesis; L-leucine from 3-methyl-2-oxobutanoate: step 1/4.</text>
</comment>
<comment type="subunit">
    <text evidence="1">Homodimer.</text>
</comment>
<comment type="subcellular location">
    <subcellularLocation>
        <location evidence="1">Cytoplasm</location>
    </subcellularLocation>
</comment>
<comment type="similarity">
    <text evidence="1">Belongs to the alpha-IPM synthase/homocitrate synthase family. LeuA type 1 subfamily.</text>
</comment>
<dbReference type="EC" id="2.3.3.13" evidence="1"/>
<dbReference type="EMBL" id="CP000388">
    <property type="protein sequence ID" value="ABG41774.1"/>
    <property type="molecule type" value="Genomic_DNA"/>
</dbReference>
<dbReference type="RefSeq" id="WP_011576004.1">
    <property type="nucleotide sequence ID" value="NC_008228.1"/>
</dbReference>
<dbReference type="SMR" id="Q15QR4"/>
<dbReference type="STRING" id="342610.Patl_3268"/>
<dbReference type="KEGG" id="pat:Patl_3268"/>
<dbReference type="eggNOG" id="COG0119">
    <property type="taxonomic scope" value="Bacteria"/>
</dbReference>
<dbReference type="HOGENOM" id="CLU_022158_0_1_6"/>
<dbReference type="OrthoDB" id="9803573at2"/>
<dbReference type="UniPathway" id="UPA00048">
    <property type="reaction ID" value="UER00070"/>
</dbReference>
<dbReference type="Proteomes" id="UP000001981">
    <property type="component" value="Chromosome"/>
</dbReference>
<dbReference type="GO" id="GO:0005829">
    <property type="term" value="C:cytosol"/>
    <property type="evidence" value="ECO:0007669"/>
    <property type="project" value="TreeGrafter"/>
</dbReference>
<dbReference type="GO" id="GO:0003852">
    <property type="term" value="F:2-isopropylmalate synthase activity"/>
    <property type="evidence" value="ECO:0007669"/>
    <property type="project" value="UniProtKB-UniRule"/>
</dbReference>
<dbReference type="GO" id="GO:0003985">
    <property type="term" value="F:acetyl-CoA C-acetyltransferase activity"/>
    <property type="evidence" value="ECO:0007669"/>
    <property type="project" value="UniProtKB-UniRule"/>
</dbReference>
<dbReference type="GO" id="GO:0030145">
    <property type="term" value="F:manganese ion binding"/>
    <property type="evidence" value="ECO:0007669"/>
    <property type="project" value="UniProtKB-UniRule"/>
</dbReference>
<dbReference type="GO" id="GO:0009098">
    <property type="term" value="P:L-leucine biosynthetic process"/>
    <property type="evidence" value="ECO:0007669"/>
    <property type="project" value="UniProtKB-UniRule"/>
</dbReference>
<dbReference type="CDD" id="cd07940">
    <property type="entry name" value="DRE_TIM_IPMS"/>
    <property type="match status" value="1"/>
</dbReference>
<dbReference type="FunFam" id="1.10.238.260:FF:000001">
    <property type="entry name" value="2-isopropylmalate synthase"/>
    <property type="match status" value="1"/>
</dbReference>
<dbReference type="FunFam" id="3.20.20.70:FF:000010">
    <property type="entry name" value="2-isopropylmalate synthase"/>
    <property type="match status" value="1"/>
</dbReference>
<dbReference type="FunFam" id="3.30.160.270:FF:000001">
    <property type="entry name" value="2-isopropylmalate synthase"/>
    <property type="match status" value="1"/>
</dbReference>
<dbReference type="Gene3D" id="1.10.238.260">
    <property type="match status" value="1"/>
</dbReference>
<dbReference type="Gene3D" id="3.30.160.270">
    <property type="match status" value="1"/>
</dbReference>
<dbReference type="Gene3D" id="3.20.20.70">
    <property type="entry name" value="Aldolase class I"/>
    <property type="match status" value="1"/>
</dbReference>
<dbReference type="HAMAP" id="MF_01025">
    <property type="entry name" value="LeuA_type1"/>
    <property type="match status" value="1"/>
</dbReference>
<dbReference type="InterPro" id="IPR050073">
    <property type="entry name" value="2-IPM_HCS-like"/>
</dbReference>
<dbReference type="InterPro" id="IPR013709">
    <property type="entry name" value="2-isopropylmalate_synth_dimer"/>
</dbReference>
<dbReference type="InterPro" id="IPR002034">
    <property type="entry name" value="AIPM/Hcit_synth_CS"/>
</dbReference>
<dbReference type="InterPro" id="IPR013785">
    <property type="entry name" value="Aldolase_TIM"/>
</dbReference>
<dbReference type="InterPro" id="IPR054691">
    <property type="entry name" value="LeuA/HCS_post-cat"/>
</dbReference>
<dbReference type="InterPro" id="IPR036230">
    <property type="entry name" value="LeuA_allosteric_dom_sf"/>
</dbReference>
<dbReference type="InterPro" id="IPR005671">
    <property type="entry name" value="LeuA_bact_synth"/>
</dbReference>
<dbReference type="InterPro" id="IPR000891">
    <property type="entry name" value="PYR_CT"/>
</dbReference>
<dbReference type="NCBIfam" id="TIGR00973">
    <property type="entry name" value="leuA_bact"/>
    <property type="match status" value="1"/>
</dbReference>
<dbReference type="NCBIfam" id="NF002084">
    <property type="entry name" value="PRK00915.1-1"/>
    <property type="match status" value="1"/>
</dbReference>
<dbReference type="NCBIfam" id="NF002086">
    <property type="entry name" value="PRK00915.1-3"/>
    <property type="match status" value="1"/>
</dbReference>
<dbReference type="PANTHER" id="PTHR10277:SF9">
    <property type="entry name" value="2-ISOPROPYLMALATE SYNTHASE 1, CHLOROPLASTIC-RELATED"/>
    <property type="match status" value="1"/>
</dbReference>
<dbReference type="PANTHER" id="PTHR10277">
    <property type="entry name" value="HOMOCITRATE SYNTHASE-RELATED"/>
    <property type="match status" value="1"/>
</dbReference>
<dbReference type="Pfam" id="PF22617">
    <property type="entry name" value="HCS_D2"/>
    <property type="match status" value="1"/>
</dbReference>
<dbReference type="Pfam" id="PF00682">
    <property type="entry name" value="HMGL-like"/>
    <property type="match status" value="1"/>
</dbReference>
<dbReference type="Pfam" id="PF08502">
    <property type="entry name" value="LeuA_dimer"/>
    <property type="match status" value="1"/>
</dbReference>
<dbReference type="SMART" id="SM00917">
    <property type="entry name" value="LeuA_dimer"/>
    <property type="match status" value="1"/>
</dbReference>
<dbReference type="SUPFAM" id="SSF110921">
    <property type="entry name" value="2-isopropylmalate synthase LeuA, allosteric (dimerisation) domain"/>
    <property type="match status" value="1"/>
</dbReference>
<dbReference type="SUPFAM" id="SSF51569">
    <property type="entry name" value="Aldolase"/>
    <property type="match status" value="1"/>
</dbReference>
<dbReference type="PROSITE" id="PS00815">
    <property type="entry name" value="AIPM_HOMOCIT_SYNTH_1"/>
    <property type="match status" value="1"/>
</dbReference>
<dbReference type="PROSITE" id="PS00816">
    <property type="entry name" value="AIPM_HOMOCIT_SYNTH_2"/>
    <property type="match status" value="1"/>
</dbReference>
<dbReference type="PROSITE" id="PS50991">
    <property type="entry name" value="PYR_CT"/>
    <property type="match status" value="1"/>
</dbReference>
<name>LEU1_PSEA6</name>
<accession>Q15QR4</accession>
<proteinExistence type="inferred from homology"/>
<keyword id="KW-0028">Amino-acid biosynthesis</keyword>
<keyword id="KW-0100">Branched-chain amino acid biosynthesis</keyword>
<keyword id="KW-0963">Cytoplasm</keyword>
<keyword id="KW-0432">Leucine biosynthesis</keyword>
<keyword id="KW-0464">Manganese</keyword>
<keyword id="KW-0479">Metal-binding</keyword>
<keyword id="KW-0808">Transferase</keyword>
<organism>
    <name type="scientific">Pseudoalteromonas atlantica (strain T6c / ATCC BAA-1087)</name>
    <dbReference type="NCBI Taxonomy" id="3042615"/>
    <lineage>
        <taxon>Bacteria</taxon>
        <taxon>Pseudomonadati</taxon>
        <taxon>Pseudomonadota</taxon>
        <taxon>Gammaproteobacteria</taxon>
        <taxon>Alteromonadales</taxon>
        <taxon>Alteromonadaceae</taxon>
        <taxon>Paraglaciecola</taxon>
    </lineage>
</organism>